<organism>
    <name type="scientific">Synechococcus sp. (strain WH7803)</name>
    <dbReference type="NCBI Taxonomy" id="32051"/>
    <lineage>
        <taxon>Bacteria</taxon>
        <taxon>Bacillati</taxon>
        <taxon>Cyanobacteriota</taxon>
        <taxon>Cyanophyceae</taxon>
        <taxon>Synechococcales</taxon>
        <taxon>Synechococcaceae</taxon>
        <taxon>Synechococcus</taxon>
    </lineage>
</organism>
<accession>A5GN87</accession>
<keyword id="KW-0255">Endonuclease</keyword>
<keyword id="KW-0378">Hydrolase</keyword>
<keyword id="KW-0479">Metal-binding</keyword>
<keyword id="KW-0540">Nuclease</keyword>
<keyword id="KW-1185">Reference proteome</keyword>
<keyword id="KW-0819">tRNA processing</keyword>
<keyword id="KW-0862">Zinc</keyword>
<evidence type="ECO:0000255" key="1">
    <source>
        <dbReference type="HAMAP-Rule" id="MF_01818"/>
    </source>
</evidence>
<comment type="function">
    <text evidence="1">Zinc phosphodiesterase, which displays some tRNA 3'-processing endonuclease activity. Probably involved in tRNA maturation, by removing a 3'-trailer from precursor tRNA.</text>
</comment>
<comment type="catalytic activity">
    <reaction evidence="1">
        <text>Endonucleolytic cleavage of RNA, removing extra 3' nucleotides from tRNA precursor, generating 3' termini of tRNAs. A 3'-hydroxy group is left at the tRNA terminus and a 5'-phosphoryl group is left at the trailer molecule.</text>
        <dbReference type="EC" id="3.1.26.11"/>
    </reaction>
</comment>
<comment type="cofactor">
    <cofactor evidence="1">
        <name>Zn(2+)</name>
        <dbReference type="ChEBI" id="CHEBI:29105"/>
    </cofactor>
    <text evidence="1">Binds 2 Zn(2+) ions.</text>
</comment>
<comment type="subunit">
    <text evidence="1">Homodimer.</text>
</comment>
<comment type="similarity">
    <text evidence="1">Belongs to the RNase Z family.</text>
</comment>
<protein>
    <recommendedName>
        <fullName evidence="1">Ribonuclease Z</fullName>
        <shortName evidence="1">RNase Z</shortName>
        <ecNumber evidence="1">3.1.26.11</ecNumber>
    </recommendedName>
    <alternativeName>
        <fullName evidence="1">tRNA 3 endonuclease</fullName>
    </alternativeName>
    <alternativeName>
        <fullName evidence="1">tRNase Z</fullName>
    </alternativeName>
</protein>
<dbReference type="EC" id="3.1.26.11" evidence="1"/>
<dbReference type="EMBL" id="CT971583">
    <property type="protein sequence ID" value="CAK24402.1"/>
    <property type="molecule type" value="Genomic_DNA"/>
</dbReference>
<dbReference type="SMR" id="A5GN87"/>
<dbReference type="STRING" id="32051.SynWH7803_1976"/>
<dbReference type="KEGG" id="syx:SynWH7803_1976"/>
<dbReference type="eggNOG" id="COG1234">
    <property type="taxonomic scope" value="Bacteria"/>
</dbReference>
<dbReference type="HOGENOM" id="CLU_031317_2_0_3"/>
<dbReference type="OrthoDB" id="9800940at2"/>
<dbReference type="Proteomes" id="UP000001566">
    <property type="component" value="Chromosome"/>
</dbReference>
<dbReference type="GO" id="GO:0042781">
    <property type="term" value="F:3'-tRNA processing endoribonuclease activity"/>
    <property type="evidence" value="ECO:0007669"/>
    <property type="project" value="UniProtKB-UniRule"/>
</dbReference>
<dbReference type="GO" id="GO:0008270">
    <property type="term" value="F:zinc ion binding"/>
    <property type="evidence" value="ECO:0007669"/>
    <property type="project" value="UniProtKB-UniRule"/>
</dbReference>
<dbReference type="CDD" id="cd07717">
    <property type="entry name" value="RNaseZ_ZiPD-like_MBL-fold"/>
    <property type="match status" value="1"/>
</dbReference>
<dbReference type="FunFam" id="3.60.15.10:FF:000002">
    <property type="entry name" value="Ribonuclease Z"/>
    <property type="match status" value="1"/>
</dbReference>
<dbReference type="Gene3D" id="3.60.15.10">
    <property type="entry name" value="Ribonuclease Z/Hydroxyacylglutathione hydrolase-like"/>
    <property type="match status" value="1"/>
</dbReference>
<dbReference type="HAMAP" id="MF_01818">
    <property type="entry name" value="RNase_Z_BN"/>
    <property type="match status" value="1"/>
</dbReference>
<dbReference type="InterPro" id="IPR001279">
    <property type="entry name" value="Metallo-B-lactamas"/>
</dbReference>
<dbReference type="InterPro" id="IPR036866">
    <property type="entry name" value="RibonucZ/Hydroxyglut_hydro"/>
</dbReference>
<dbReference type="InterPro" id="IPR013471">
    <property type="entry name" value="RNase_Z/BN"/>
</dbReference>
<dbReference type="NCBIfam" id="NF000801">
    <property type="entry name" value="PRK00055.1-3"/>
    <property type="match status" value="1"/>
</dbReference>
<dbReference type="NCBIfam" id="TIGR02651">
    <property type="entry name" value="RNase_Z"/>
    <property type="match status" value="1"/>
</dbReference>
<dbReference type="PANTHER" id="PTHR46018">
    <property type="entry name" value="ZINC PHOSPHODIESTERASE ELAC PROTEIN 1"/>
    <property type="match status" value="1"/>
</dbReference>
<dbReference type="PANTHER" id="PTHR46018:SF2">
    <property type="entry name" value="ZINC PHOSPHODIESTERASE ELAC PROTEIN 1"/>
    <property type="match status" value="1"/>
</dbReference>
<dbReference type="Pfam" id="PF12706">
    <property type="entry name" value="Lactamase_B_2"/>
    <property type="match status" value="2"/>
</dbReference>
<dbReference type="SUPFAM" id="SSF56281">
    <property type="entry name" value="Metallo-hydrolase/oxidoreductase"/>
    <property type="match status" value="1"/>
</dbReference>
<reference key="1">
    <citation type="submission" date="2006-05" db="EMBL/GenBank/DDBJ databases">
        <authorList>
            <consortium name="Genoscope"/>
        </authorList>
    </citation>
    <scope>NUCLEOTIDE SEQUENCE [LARGE SCALE GENOMIC DNA]</scope>
    <source>
        <strain>WH7803</strain>
    </source>
</reference>
<feature type="chain" id="PRO_1000070345" description="Ribonuclease Z">
    <location>
        <begin position="1"/>
        <end position="323"/>
    </location>
</feature>
<feature type="active site" description="Proton acceptor" evidence="1">
    <location>
        <position position="66"/>
    </location>
</feature>
<feature type="binding site" evidence="1">
    <location>
        <position position="62"/>
    </location>
    <ligand>
        <name>Zn(2+)</name>
        <dbReference type="ChEBI" id="CHEBI:29105"/>
        <label>1</label>
        <note>catalytic</note>
    </ligand>
</feature>
<feature type="binding site" evidence="1">
    <location>
        <position position="64"/>
    </location>
    <ligand>
        <name>Zn(2+)</name>
        <dbReference type="ChEBI" id="CHEBI:29105"/>
        <label>1</label>
        <note>catalytic</note>
    </ligand>
</feature>
<feature type="binding site" evidence="1">
    <location>
        <position position="66"/>
    </location>
    <ligand>
        <name>Zn(2+)</name>
        <dbReference type="ChEBI" id="CHEBI:29105"/>
        <label>2</label>
        <note>catalytic</note>
    </ligand>
</feature>
<feature type="binding site" evidence="1">
    <location>
        <position position="67"/>
    </location>
    <ligand>
        <name>Zn(2+)</name>
        <dbReference type="ChEBI" id="CHEBI:29105"/>
        <label>2</label>
        <note>catalytic</note>
    </ligand>
</feature>
<feature type="binding site" evidence="1">
    <location>
        <position position="144"/>
    </location>
    <ligand>
        <name>Zn(2+)</name>
        <dbReference type="ChEBI" id="CHEBI:29105"/>
        <label>1</label>
        <note>catalytic</note>
    </ligand>
</feature>
<feature type="binding site" evidence="1">
    <location>
        <position position="215"/>
    </location>
    <ligand>
        <name>Zn(2+)</name>
        <dbReference type="ChEBI" id="CHEBI:29105"/>
        <label>1</label>
        <note>catalytic</note>
    </ligand>
</feature>
<feature type="binding site" evidence="1">
    <location>
        <position position="215"/>
    </location>
    <ligand>
        <name>Zn(2+)</name>
        <dbReference type="ChEBI" id="CHEBI:29105"/>
        <label>2</label>
        <note>catalytic</note>
    </ligand>
</feature>
<feature type="binding site" evidence="1">
    <location>
        <position position="273"/>
    </location>
    <ligand>
        <name>Zn(2+)</name>
        <dbReference type="ChEBI" id="CHEBI:29105"/>
        <label>2</label>
        <note>catalytic</note>
    </ligand>
</feature>
<name>RNZ_SYNPW</name>
<sequence>MQVTFLGTSSGVPTRARNVSAVALRLPQRSELWLFDCGEGTQHQFLRSDLRLSQLRRVFITHMHGDHVFGLPGLLASLGLSGSSAGVDLYGPDPLDAYLHGVLRTSSTRIGYPLAVHPVRGAAESGRIVFEDDDLQVRATPLHHRVPAYAYRVDQKPRAGRFDVAKARDLNIPPGPVYAALKRGETVTLDDGRRIDGHALCGPPRRGASVVYCTDTVFCEAAVELARGADLLIHESTFSHAEAEMAFQRQHSTSTMAAQTAAEAGVSQLVLTHLSPRYAPGNAVTANDLLAEAQAIFPATVLAKDFLSIDVTPQTDPSCCNSS</sequence>
<proteinExistence type="inferred from homology"/>
<gene>
    <name evidence="1" type="primary">rnz</name>
    <name type="ordered locus">SynWH7803_1976</name>
</gene>